<dbReference type="EMBL" id="BC082612">
    <property type="protein sequence ID" value="AAH82612.1"/>
    <property type="molecule type" value="mRNA"/>
</dbReference>
<dbReference type="RefSeq" id="NP_001082192.1">
    <property type="nucleotide sequence ID" value="NM_001088723.1"/>
</dbReference>
<dbReference type="SMR" id="Q640L2"/>
<dbReference type="GlyCosmos" id="Q640L2">
    <property type="glycosylation" value="3 sites, No reported glycans"/>
</dbReference>
<dbReference type="DNASU" id="398284"/>
<dbReference type="GeneID" id="398284"/>
<dbReference type="KEGG" id="xla:398284"/>
<dbReference type="AGR" id="Xenbase:XB-GENE-995747"/>
<dbReference type="CTD" id="398284"/>
<dbReference type="Xenbase" id="XB-GENE-995747">
    <property type="gene designation" value="slc37a3.L"/>
</dbReference>
<dbReference type="OrthoDB" id="3639251at2759"/>
<dbReference type="Proteomes" id="UP000186698">
    <property type="component" value="Chromosome 3L"/>
</dbReference>
<dbReference type="Bgee" id="398284">
    <property type="expression patterns" value="Expressed in egg cell and 19 other cell types or tissues"/>
</dbReference>
<dbReference type="GO" id="GO:0005789">
    <property type="term" value="C:endoplasmic reticulum membrane"/>
    <property type="evidence" value="ECO:0000250"/>
    <property type="project" value="UniProtKB"/>
</dbReference>
<dbReference type="GO" id="GO:0005765">
    <property type="term" value="C:lysosomal membrane"/>
    <property type="evidence" value="ECO:0007669"/>
    <property type="project" value="UniProtKB-SubCell"/>
</dbReference>
<dbReference type="GO" id="GO:0022857">
    <property type="term" value="F:transmembrane transporter activity"/>
    <property type="evidence" value="ECO:0007669"/>
    <property type="project" value="InterPro"/>
</dbReference>
<dbReference type="CDD" id="cd17342">
    <property type="entry name" value="MFS_SLC37A3"/>
    <property type="match status" value="1"/>
</dbReference>
<dbReference type="FunFam" id="1.20.1250.20:FF:000028">
    <property type="entry name" value="Sugar phosphate exchanger 3 isoform 1"/>
    <property type="match status" value="1"/>
</dbReference>
<dbReference type="FunFam" id="1.20.1250.20:FF:000132">
    <property type="entry name" value="sugar phosphate exchanger 3 isoform X1"/>
    <property type="match status" value="1"/>
</dbReference>
<dbReference type="Gene3D" id="1.20.1250.20">
    <property type="entry name" value="MFS general substrate transporter like domains"/>
    <property type="match status" value="2"/>
</dbReference>
<dbReference type="InterPro" id="IPR011701">
    <property type="entry name" value="MFS"/>
</dbReference>
<dbReference type="InterPro" id="IPR020846">
    <property type="entry name" value="MFS_dom"/>
</dbReference>
<dbReference type="InterPro" id="IPR036259">
    <property type="entry name" value="MFS_trans_sf"/>
</dbReference>
<dbReference type="InterPro" id="IPR000849">
    <property type="entry name" value="Sugar_P_transporter"/>
</dbReference>
<dbReference type="PANTHER" id="PTHR43184">
    <property type="entry name" value="MAJOR FACILITATOR SUPERFAMILY TRANSPORTER 16, ISOFORM B"/>
    <property type="match status" value="1"/>
</dbReference>
<dbReference type="PANTHER" id="PTHR43184:SF12">
    <property type="entry name" value="SUGAR PHOSPHATE EXCHANGER 3"/>
    <property type="match status" value="1"/>
</dbReference>
<dbReference type="Pfam" id="PF07690">
    <property type="entry name" value="MFS_1"/>
    <property type="match status" value="1"/>
</dbReference>
<dbReference type="PIRSF" id="PIRSF002808">
    <property type="entry name" value="Hexose_phosphate_transp"/>
    <property type="match status" value="1"/>
</dbReference>
<dbReference type="SUPFAM" id="SSF103473">
    <property type="entry name" value="MFS general substrate transporter"/>
    <property type="match status" value="1"/>
</dbReference>
<dbReference type="PROSITE" id="PS50850">
    <property type="entry name" value="MFS"/>
    <property type="match status" value="1"/>
</dbReference>
<accession>Q640L2</accession>
<proteinExistence type="evidence at transcript level"/>
<keyword id="KW-0256">Endoplasmic reticulum</keyword>
<keyword id="KW-0325">Glycoprotein</keyword>
<keyword id="KW-0458">Lysosome</keyword>
<keyword id="KW-0472">Membrane</keyword>
<keyword id="KW-1185">Reference proteome</keyword>
<keyword id="KW-0762">Sugar transport</keyword>
<keyword id="KW-0812">Transmembrane</keyword>
<keyword id="KW-1133">Transmembrane helix</keyword>
<keyword id="KW-0813">Transport</keyword>
<feature type="chain" id="PRO_0000309281" description="Sugar phosphate exchanger 3">
    <location>
        <begin position="1"/>
        <end position="503"/>
    </location>
</feature>
<feature type="transmembrane region" description="Helical" evidence="2">
    <location>
        <begin position="20"/>
        <end position="40"/>
    </location>
</feature>
<feature type="transmembrane region" description="Helical" evidence="2">
    <location>
        <begin position="87"/>
        <end position="107"/>
    </location>
</feature>
<feature type="transmembrane region" description="Helical" evidence="2">
    <location>
        <begin position="119"/>
        <end position="139"/>
    </location>
</feature>
<feature type="transmembrane region" description="Helical" evidence="2">
    <location>
        <begin position="152"/>
        <end position="172"/>
    </location>
</feature>
<feature type="transmembrane region" description="Helical" evidence="2">
    <location>
        <begin position="183"/>
        <end position="203"/>
    </location>
</feature>
<feature type="transmembrane region" description="Helical" evidence="2">
    <location>
        <begin position="214"/>
        <end position="234"/>
    </location>
</feature>
<feature type="transmembrane region" description="Helical" evidence="2">
    <location>
        <begin position="300"/>
        <end position="322"/>
    </location>
</feature>
<feature type="transmembrane region" description="Helical" evidence="2">
    <location>
        <begin position="342"/>
        <end position="362"/>
    </location>
</feature>
<feature type="transmembrane region" description="Helical" evidence="2">
    <location>
        <begin position="367"/>
        <end position="387"/>
    </location>
</feature>
<feature type="transmembrane region" description="Helical" evidence="2">
    <location>
        <begin position="395"/>
        <end position="415"/>
    </location>
</feature>
<feature type="transmembrane region" description="Helical" evidence="2">
    <location>
        <begin position="437"/>
        <end position="457"/>
    </location>
</feature>
<feature type="transmembrane region" description="Helical" evidence="2">
    <location>
        <begin position="466"/>
        <end position="486"/>
    </location>
</feature>
<feature type="glycosylation site" description="N-linked (GlcNAc...) asparagine" evidence="2">
    <location>
        <position position="62"/>
    </location>
</feature>
<feature type="glycosylation site" description="N-linked (GlcNAc...) asparagine" evidence="2">
    <location>
        <position position="71"/>
    </location>
</feature>
<feature type="glycosylation site" description="N-linked (GlcNAc...) asparagine" evidence="2">
    <location>
        <position position="275"/>
    </location>
</feature>
<protein>
    <recommendedName>
        <fullName>Sugar phosphate exchanger 3</fullName>
    </recommendedName>
    <alternativeName>
        <fullName>Solute carrier family 37 member 3</fullName>
    </alternativeName>
</protein>
<gene>
    <name type="primary">slc37a3</name>
    <name type="synonym">spx3</name>
</gene>
<organism>
    <name type="scientific">Xenopus laevis</name>
    <name type="common">African clawed frog</name>
    <dbReference type="NCBI Taxonomy" id="8355"/>
    <lineage>
        <taxon>Eukaryota</taxon>
        <taxon>Metazoa</taxon>
        <taxon>Chordata</taxon>
        <taxon>Craniata</taxon>
        <taxon>Vertebrata</taxon>
        <taxon>Euteleostomi</taxon>
        <taxon>Amphibia</taxon>
        <taxon>Batrachia</taxon>
        <taxon>Anura</taxon>
        <taxon>Pipoidea</taxon>
        <taxon>Pipidae</taxon>
        <taxon>Xenopodinae</taxon>
        <taxon>Xenopus</taxon>
        <taxon>Xenopus</taxon>
    </lineage>
</organism>
<comment type="function">
    <text evidence="1">Unlike the other SLC37 members, seems to lack glucose-6-phosphate antiporter activity.</text>
</comment>
<comment type="subcellular location">
    <subcellularLocation>
        <location evidence="1">Endoplasmic reticulum membrane</location>
        <topology evidence="2">Multi-pass membrane protein</topology>
    </subcellularLocation>
    <subcellularLocation>
        <location evidence="1">Lysosome membrane</location>
        <topology evidence="2">Multi-pass membrane protein</topology>
    </subcellularLocation>
</comment>
<comment type="similarity">
    <text evidence="3">Belongs to the major facilitator superfamily. Organophosphate:Pi antiporter (OPA) (TC 2.A.1.4) family.</text>
</comment>
<reference key="1">
    <citation type="submission" date="2004-09" db="EMBL/GenBank/DDBJ databases">
        <authorList>
            <consortium name="NIH - Xenopus Gene Collection (XGC) project"/>
        </authorList>
    </citation>
    <scope>NUCLEOTIDE SEQUENCE [LARGE SCALE MRNA]</scope>
    <source>
        <tissue>Embryo</tissue>
    </source>
</reference>
<name>SPX3_XENLA</name>
<sequence length="503" mass="55600">MDFPVNTRRMAGRRGFFSQYTHHHLAAFLLTFFSYSLLHASRKSFSNVKVSVSSQWTPSDLNSSAYIVLPNETWNGNTLFPNTKSATLFLGLLDTIFLFAYAVGLFISGIIGDRLNMRLVLTFGMCSSAITMFVFGTLTEWLQFYNKIFYCLVWIVNGLLQSTGWPCVVAIMGNWFGKSGRGFVFGLWSACASVGNILGAFLASSVLKYGYEYAFLVTASVQFAGGIIIFFGLVTSPKELGLPDTGEGEMDRAAQEEGANKPLIGGNDEGDDESNYSIQSDDVVITPKAIGFMQACCLPGVLLYSLAYACLKLVNYSFFFWLPYYLSNNFKWKEAEADQLSIWYDIGGIVGGTVQGLISDLMKMRSPVLTVSLLLAVGALFGYSHSPNDKVMNAFIMSITGFFIGGPSNMISSAISADLGRQEMVRGSSEALATVTGIVDGTGSIGAAMGQFLVPLIQNSLNWMWVFYFFIFMICMTTVFMVPLIVRETRDWLRQRRSSRLER</sequence>
<evidence type="ECO:0000250" key="1">
    <source>
        <dbReference type="UniProtKB" id="Q8NCC5"/>
    </source>
</evidence>
<evidence type="ECO:0000255" key="2"/>
<evidence type="ECO:0000305" key="3"/>